<feature type="chain" id="PRO_0000050474" description="Probable inorganic phosphate transporter 1-7">
    <location>
        <begin position="1"/>
        <end position="535"/>
    </location>
</feature>
<feature type="topological domain" description="Cytoplasmic" evidence="3">
    <location>
        <begin position="1"/>
        <end position="24"/>
    </location>
</feature>
<feature type="transmembrane region" description="Helical" evidence="3">
    <location>
        <begin position="25"/>
        <end position="45"/>
    </location>
</feature>
<feature type="topological domain" description="Extracellular" evidence="3">
    <location>
        <begin position="46"/>
        <end position="70"/>
    </location>
</feature>
<feature type="transmembrane region" description="Helical" evidence="3">
    <location>
        <begin position="71"/>
        <end position="91"/>
    </location>
</feature>
<feature type="topological domain" description="Cytoplasmic" evidence="3">
    <location>
        <begin position="92"/>
        <end position="99"/>
    </location>
</feature>
<feature type="transmembrane region" description="Helical" evidence="3">
    <location>
        <begin position="100"/>
        <end position="120"/>
    </location>
</feature>
<feature type="topological domain" description="Extracellular" evidence="3">
    <location>
        <begin position="121"/>
        <end position="131"/>
    </location>
</feature>
<feature type="transmembrane region" description="Helical" evidence="3">
    <location>
        <begin position="132"/>
        <end position="152"/>
    </location>
</feature>
<feature type="topological domain" description="Cytoplasmic" evidence="3">
    <location>
        <begin position="153"/>
        <end position="161"/>
    </location>
</feature>
<feature type="transmembrane region" description="Helical" evidence="3">
    <location>
        <begin position="162"/>
        <end position="182"/>
    </location>
</feature>
<feature type="topological domain" description="Extracellular" evidence="3">
    <location>
        <begin position="183"/>
        <end position="211"/>
    </location>
</feature>
<feature type="transmembrane region" description="Helical" evidence="3">
    <location>
        <begin position="212"/>
        <end position="232"/>
    </location>
</feature>
<feature type="topological domain" description="Cytoplasmic" evidence="3">
    <location>
        <begin position="233"/>
        <end position="289"/>
    </location>
</feature>
<feature type="transmembrane region" description="Helical" evidence="3">
    <location>
        <begin position="290"/>
        <end position="310"/>
    </location>
</feature>
<feature type="topological domain" description="Extracellular" evidence="3">
    <location>
        <begin position="311"/>
        <end position="345"/>
    </location>
</feature>
<feature type="transmembrane region" description="Helical" evidence="3">
    <location>
        <begin position="346"/>
        <end position="366"/>
    </location>
</feature>
<feature type="topological domain" description="Cytoplasmic" evidence="3">
    <location>
        <begin position="367"/>
        <end position="368"/>
    </location>
</feature>
<feature type="transmembrane region" description="Helical" evidence="3">
    <location>
        <begin position="369"/>
        <end position="389"/>
    </location>
</feature>
<feature type="topological domain" description="Extracellular" evidence="3">
    <location>
        <begin position="390"/>
        <end position="399"/>
    </location>
</feature>
<feature type="transmembrane region" description="Helical" evidence="3">
    <location>
        <begin position="400"/>
        <end position="420"/>
    </location>
</feature>
<feature type="topological domain" description="Cytoplasmic" evidence="3">
    <location>
        <begin position="421"/>
        <end position="438"/>
    </location>
</feature>
<feature type="transmembrane region" description="Helical" evidence="3">
    <location>
        <begin position="439"/>
        <end position="459"/>
    </location>
</feature>
<feature type="topological domain" description="Extracellular" evidence="3">
    <location>
        <begin position="460"/>
        <end position="480"/>
    </location>
</feature>
<feature type="transmembrane region" description="Helical" evidence="3">
    <location>
        <begin position="481"/>
        <end position="501"/>
    </location>
</feature>
<feature type="topological domain" description="Cytoplasmic" evidence="3">
    <location>
        <begin position="502"/>
        <end position="535"/>
    </location>
</feature>
<feature type="region of interest" description="Disordered" evidence="4">
    <location>
        <begin position="506"/>
        <end position="535"/>
    </location>
</feature>
<feature type="compositionally biased region" description="Low complexity" evidence="4">
    <location>
        <begin position="519"/>
        <end position="535"/>
    </location>
</feature>
<feature type="modified residue" description="Phosphoserine" evidence="2">
    <location>
        <position position="520"/>
    </location>
</feature>
<feature type="sequence conflict" description="In Ref. 3." evidence="7" ref="3">
    <original>A</original>
    <variation>P</variation>
    <location>
        <position position="77"/>
    </location>
</feature>
<reference key="1">
    <citation type="journal article" date="2000" name="Nature">
        <title>Sequence and analysis of chromosome 3 of the plant Arabidopsis thaliana.</title>
        <authorList>
            <person name="Salanoubat M."/>
            <person name="Lemcke K."/>
            <person name="Rieger M."/>
            <person name="Ansorge W."/>
            <person name="Unseld M."/>
            <person name="Fartmann B."/>
            <person name="Valle G."/>
            <person name="Bloecker H."/>
            <person name="Perez-Alonso M."/>
            <person name="Obermaier B."/>
            <person name="Delseny M."/>
            <person name="Boutry M."/>
            <person name="Grivell L.A."/>
            <person name="Mache R."/>
            <person name="Puigdomenech P."/>
            <person name="De Simone V."/>
            <person name="Choisne N."/>
            <person name="Artiguenave F."/>
            <person name="Robert C."/>
            <person name="Brottier P."/>
            <person name="Wincker P."/>
            <person name="Cattolico L."/>
            <person name="Weissenbach J."/>
            <person name="Saurin W."/>
            <person name="Quetier F."/>
            <person name="Schaefer M."/>
            <person name="Mueller-Auer S."/>
            <person name="Gabel C."/>
            <person name="Fuchs M."/>
            <person name="Benes V."/>
            <person name="Wurmbach E."/>
            <person name="Drzonek H."/>
            <person name="Erfle H."/>
            <person name="Jordan N."/>
            <person name="Bangert S."/>
            <person name="Wiedelmann R."/>
            <person name="Kranz H."/>
            <person name="Voss H."/>
            <person name="Holland R."/>
            <person name="Brandt P."/>
            <person name="Nyakatura G."/>
            <person name="Vezzi A."/>
            <person name="D'Angelo M."/>
            <person name="Pallavicini A."/>
            <person name="Toppo S."/>
            <person name="Simionati B."/>
            <person name="Conrad A."/>
            <person name="Hornischer K."/>
            <person name="Kauer G."/>
            <person name="Loehnert T.-H."/>
            <person name="Nordsiek G."/>
            <person name="Reichelt J."/>
            <person name="Scharfe M."/>
            <person name="Schoen O."/>
            <person name="Bargues M."/>
            <person name="Terol J."/>
            <person name="Climent J."/>
            <person name="Navarro P."/>
            <person name="Collado C."/>
            <person name="Perez-Perez A."/>
            <person name="Ottenwaelder B."/>
            <person name="Duchemin D."/>
            <person name="Cooke R."/>
            <person name="Laudie M."/>
            <person name="Berger-Llauro C."/>
            <person name="Purnelle B."/>
            <person name="Masuy D."/>
            <person name="de Haan M."/>
            <person name="Maarse A.C."/>
            <person name="Alcaraz J.-P."/>
            <person name="Cottet A."/>
            <person name="Casacuberta E."/>
            <person name="Monfort A."/>
            <person name="Argiriou A."/>
            <person name="Flores M."/>
            <person name="Liguori R."/>
            <person name="Vitale D."/>
            <person name="Mannhaupt G."/>
            <person name="Haase D."/>
            <person name="Schoof H."/>
            <person name="Rudd S."/>
            <person name="Zaccaria P."/>
            <person name="Mewes H.-W."/>
            <person name="Mayer K.F.X."/>
            <person name="Kaul S."/>
            <person name="Town C.D."/>
            <person name="Koo H.L."/>
            <person name="Tallon L.J."/>
            <person name="Jenkins J."/>
            <person name="Rooney T."/>
            <person name="Rizzo M."/>
            <person name="Walts A."/>
            <person name="Utterback T."/>
            <person name="Fujii C.Y."/>
            <person name="Shea T.P."/>
            <person name="Creasy T.H."/>
            <person name="Haas B."/>
            <person name="Maiti R."/>
            <person name="Wu D."/>
            <person name="Peterson J."/>
            <person name="Van Aken S."/>
            <person name="Pai G."/>
            <person name="Militscher J."/>
            <person name="Sellers P."/>
            <person name="Gill J.E."/>
            <person name="Feldblyum T.V."/>
            <person name="Preuss D."/>
            <person name="Lin X."/>
            <person name="Nierman W.C."/>
            <person name="Salzberg S.L."/>
            <person name="White O."/>
            <person name="Venter J.C."/>
            <person name="Fraser C.M."/>
            <person name="Kaneko T."/>
            <person name="Nakamura Y."/>
            <person name="Sato S."/>
            <person name="Kato T."/>
            <person name="Asamizu E."/>
            <person name="Sasamoto S."/>
            <person name="Kimura T."/>
            <person name="Idesawa K."/>
            <person name="Kawashima K."/>
            <person name="Kishida Y."/>
            <person name="Kiyokawa C."/>
            <person name="Kohara M."/>
            <person name="Matsumoto M."/>
            <person name="Matsuno A."/>
            <person name="Muraki A."/>
            <person name="Nakayama S."/>
            <person name="Nakazaki N."/>
            <person name="Shinpo S."/>
            <person name="Takeuchi C."/>
            <person name="Wada T."/>
            <person name="Watanabe A."/>
            <person name="Yamada M."/>
            <person name="Yasuda M."/>
            <person name="Tabata S."/>
        </authorList>
    </citation>
    <scope>NUCLEOTIDE SEQUENCE [LARGE SCALE GENOMIC DNA]</scope>
    <source>
        <strain>cv. Columbia</strain>
    </source>
</reference>
<reference key="2">
    <citation type="journal article" date="2017" name="Plant J.">
        <title>Araport11: a complete reannotation of the Arabidopsis thaliana reference genome.</title>
        <authorList>
            <person name="Cheng C.Y."/>
            <person name="Krishnakumar V."/>
            <person name="Chan A.P."/>
            <person name="Thibaud-Nissen F."/>
            <person name="Schobel S."/>
            <person name="Town C.D."/>
        </authorList>
    </citation>
    <scope>GENOME REANNOTATION</scope>
    <source>
        <strain>cv. Columbia</strain>
    </source>
</reference>
<reference key="3">
    <citation type="submission" date="2005-07" db="EMBL/GenBank/DDBJ databases">
        <title>Arabidopsis ORF clones.</title>
        <authorList>
            <person name="Cheuk R.F."/>
            <person name="Chen H."/>
            <person name="Kim C.J."/>
            <person name="Shinn P."/>
            <person name="Ecker J.R."/>
        </authorList>
    </citation>
    <scope>NUCLEOTIDE SEQUENCE [LARGE SCALE MRNA] OF 50-535</scope>
    <source>
        <strain>cv. Columbia</strain>
    </source>
</reference>
<reference key="4">
    <citation type="journal article" date="2002" name="Plant J.">
        <title>Expression analysis suggests novel roles for members of the Pht1 family of phosphate transporters in Arabidopsis.</title>
        <authorList>
            <person name="Mudge S.R."/>
            <person name="Rae A.L."/>
            <person name="Diatloff E."/>
            <person name="Smith F.W."/>
        </authorList>
    </citation>
    <scope>TISSUE SPECIFICITY</scope>
    <scope>INDUCTION</scope>
    <scope>GENE FAMILY</scope>
    <scope>NOMENCLATURE</scope>
</reference>
<reference key="5">
    <citation type="journal article" date="2004" name="Plant Mol. Biol.">
        <title>Transcriptional regulation and functional properties of Arabidopsis Pht1;4, a high affinity transporter contributing greatly to phosphate uptake in phosphate deprived plants.</title>
        <authorList>
            <person name="Misson J."/>
            <person name="Thibaud M.-C."/>
            <person name="Bechtold N."/>
            <person name="Raghothama K."/>
            <person name="Nussaume L."/>
        </authorList>
    </citation>
    <scope>INDUCTION</scope>
</reference>
<dbReference type="EMBL" id="AL138650">
    <property type="protein sequence ID" value="CAB77590.1"/>
    <property type="molecule type" value="Genomic_DNA"/>
</dbReference>
<dbReference type="EMBL" id="CP002686">
    <property type="protein sequence ID" value="AEE79268.1"/>
    <property type="molecule type" value="Genomic_DNA"/>
</dbReference>
<dbReference type="EMBL" id="CP002686">
    <property type="protein sequence ID" value="ANM63815.1"/>
    <property type="molecule type" value="Genomic_DNA"/>
</dbReference>
<dbReference type="EMBL" id="BT023736">
    <property type="protein sequence ID" value="AAZ23928.1"/>
    <property type="status" value="ALT_INIT"/>
    <property type="molecule type" value="mRNA"/>
</dbReference>
<dbReference type="PIR" id="T47629">
    <property type="entry name" value="T47629"/>
</dbReference>
<dbReference type="SMR" id="Q494P0"/>
<dbReference type="FunCoup" id="Q494P0">
    <property type="interactions" value="445"/>
</dbReference>
<dbReference type="STRING" id="3702.Q494P0"/>
<dbReference type="PaxDb" id="3702-AT3G54700.1"/>
<dbReference type="ProteomicsDB" id="234665"/>
<dbReference type="EnsemblPlants" id="AT3G54700.1">
    <property type="protein sequence ID" value="AT3G54700.1"/>
    <property type="gene ID" value="AT3G54700"/>
</dbReference>
<dbReference type="EnsemblPlants" id="AT3G54700.2">
    <property type="protein sequence ID" value="AT3G54700.2"/>
    <property type="gene ID" value="AT3G54700"/>
</dbReference>
<dbReference type="Gramene" id="AT3G54700.1">
    <property type="protein sequence ID" value="AT3G54700.1"/>
    <property type="gene ID" value="AT3G54700"/>
</dbReference>
<dbReference type="Gramene" id="AT3G54700.2">
    <property type="protein sequence ID" value="AT3G54700.2"/>
    <property type="gene ID" value="AT3G54700"/>
</dbReference>
<dbReference type="KEGG" id="ath:AT3G54700"/>
<dbReference type="Araport" id="AT3G54700"/>
<dbReference type="TAIR" id="AT3G54700">
    <property type="gene designation" value="PHT1"/>
</dbReference>
<dbReference type="eggNOG" id="KOG0252">
    <property type="taxonomic scope" value="Eukaryota"/>
</dbReference>
<dbReference type="HOGENOM" id="CLU_001265_46_14_1"/>
<dbReference type="InParanoid" id="Q494P0"/>
<dbReference type="OMA" id="LNSHWHL"/>
<dbReference type="PhylomeDB" id="Q494P0"/>
<dbReference type="PRO" id="PR:Q494P0"/>
<dbReference type="Proteomes" id="UP000006548">
    <property type="component" value="Chromosome 3"/>
</dbReference>
<dbReference type="ExpressionAtlas" id="Q494P0">
    <property type="expression patterns" value="baseline and differential"/>
</dbReference>
<dbReference type="GO" id="GO:0005886">
    <property type="term" value="C:plasma membrane"/>
    <property type="evidence" value="ECO:0007005"/>
    <property type="project" value="TAIR"/>
</dbReference>
<dbReference type="GO" id="GO:1901683">
    <property type="term" value="F:arsenate ion transmembrane transporter activity"/>
    <property type="evidence" value="ECO:0000315"/>
    <property type="project" value="TAIR"/>
</dbReference>
<dbReference type="GO" id="GO:0005315">
    <property type="term" value="F:phosphate transmembrane transporter activity"/>
    <property type="evidence" value="ECO:0007669"/>
    <property type="project" value="InterPro"/>
</dbReference>
<dbReference type="GO" id="GO:0015293">
    <property type="term" value="F:symporter activity"/>
    <property type="evidence" value="ECO:0007669"/>
    <property type="project" value="UniProtKB-KW"/>
</dbReference>
<dbReference type="GO" id="GO:1901684">
    <property type="term" value="P:arsenate ion transmembrane transport"/>
    <property type="evidence" value="ECO:0000315"/>
    <property type="project" value="TAIR"/>
</dbReference>
<dbReference type="GO" id="GO:0006817">
    <property type="term" value="P:phosphate ion transport"/>
    <property type="evidence" value="ECO:0007669"/>
    <property type="project" value="UniProtKB-KW"/>
</dbReference>
<dbReference type="CDD" id="cd17364">
    <property type="entry name" value="MFS_PhT"/>
    <property type="match status" value="1"/>
</dbReference>
<dbReference type="FunFam" id="1.20.1250.20:FF:000175">
    <property type="entry name" value="Inorganic phosphate transporter 1-6"/>
    <property type="match status" value="1"/>
</dbReference>
<dbReference type="Gene3D" id="1.20.1250.20">
    <property type="entry name" value="MFS general substrate transporter like domains"/>
    <property type="match status" value="1"/>
</dbReference>
<dbReference type="InterPro" id="IPR020846">
    <property type="entry name" value="MFS_dom"/>
</dbReference>
<dbReference type="InterPro" id="IPR005828">
    <property type="entry name" value="MFS_sugar_transport-like"/>
</dbReference>
<dbReference type="InterPro" id="IPR036259">
    <property type="entry name" value="MFS_trans_sf"/>
</dbReference>
<dbReference type="InterPro" id="IPR004738">
    <property type="entry name" value="Phos_permease"/>
</dbReference>
<dbReference type="NCBIfam" id="TIGR00887">
    <property type="entry name" value="2A0109"/>
    <property type="match status" value="1"/>
</dbReference>
<dbReference type="PANTHER" id="PTHR24064">
    <property type="entry name" value="SOLUTE CARRIER FAMILY 22 MEMBER"/>
    <property type="match status" value="1"/>
</dbReference>
<dbReference type="Pfam" id="PF00083">
    <property type="entry name" value="Sugar_tr"/>
    <property type="match status" value="1"/>
</dbReference>
<dbReference type="SUPFAM" id="SSF103473">
    <property type="entry name" value="MFS general substrate transporter"/>
    <property type="match status" value="1"/>
</dbReference>
<dbReference type="PROSITE" id="PS50850">
    <property type="entry name" value="MFS"/>
    <property type="match status" value="1"/>
</dbReference>
<protein>
    <recommendedName>
        <fullName>Probable inorganic phosphate transporter 1-7</fullName>
        <shortName>AtPht1;7</shortName>
    </recommendedName>
    <alternativeName>
        <fullName>H(+)/Pi cotransporter</fullName>
    </alternativeName>
</protein>
<keyword id="KW-0472">Membrane</keyword>
<keyword id="KW-0592">Phosphate transport</keyword>
<keyword id="KW-0597">Phosphoprotein</keyword>
<keyword id="KW-1185">Reference proteome</keyword>
<keyword id="KW-0769">Symport</keyword>
<keyword id="KW-0812">Transmembrane</keyword>
<keyword id="KW-1133">Transmembrane helix</keyword>
<keyword id="KW-0813">Transport</keyword>
<comment type="function">
    <text evidence="1">High-affinity transporter for external inorganic phosphate.</text>
</comment>
<comment type="subcellular location">
    <subcellularLocation>
        <location evidence="1">Membrane</location>
        <topology evidence="1">Multi-pass membrane protein</topology>
    </subcellularLocation>
</comment>
<comment type="tissue specificity">
    <text evidence="5">Mature pollen.</text>
</comment>
<comment type="induction">
    <text evidence="5 6">Slightly induced in roots during phosphate starvation.</text>
</comment>
<comment type="miscellaneous">
    <text>Although related to the sugar transporter family, it does not transport sugars.</text>
</comment>
<comment type="similarity">
    <text evidence="7">Belongs to the major facilitator superfamily. Phosphate:H(+) symporter (TC 2.A.1.9) family.</text>
</comment>
<comment type="sequence caution" evidence="7">
    <conflict type="erroneous initiation">
        <sequence resource="EMBL-CDS" id="AAZ23928"/>
    </conflict>
</comment>
<organism>
    <name type="scientific">Arabidopsis thaliana</name>
    <name type="common">Mouse-ear cress</name>
    <dbReference type="NCBI Taxonomy" id="3702"/>
    <lineage>
        <taxon>Eukaryota</taxon>
        <taxon>Viridiplantae</taxon>
        <taxon>Streptophyta</taxon>
        <taxon>Embryophyta</taxon>
        <taxon>Tracheophyta</taxon>
        <taxon>Spermatophyta</taxon>
        <taxon>Magnoliopsida</taxon>
        <taxon>eudicotyledons</taxon>
        <taxon>Gunneridae</taxon>
        <taxon>Pentapetalae</taxon>
        <taxon>rosids</taxon>
        <taxon>malvids</taxon>
        <taxon>Brassicales</taxon>
        <taxon>Brassicaceae</taxon>
        <taxon>Camelineae</taxon>
        <taxon>Arabidopsis</taxon>
    </lineage>
</organism>
<sequence>MAGDQLNVLNALDVAKTQWYHFTAIIIAGMGFFTDAYDLFCISLVTKLLGRIYYHVDGSEKPGTLPPNVSAAVNGVAFCGTLAGQLFFGWLGDKLGRKKVYGMTLMVMVLCSIASGLSFGSNPKTVMTTLCFFRFWLGFGIGGDYPLSATIMSEYANKKTRGAFIAAVFAMQGFGILTGGIFAIIVSAAFEAKFPAPTYQIDALASTVPQADYVWRIILMVGALPAAMTYYSRSKMPETARYTALVAKDAKLAASNMSKVLQVEIEAEQQGTEDKSNSFGLFSKEFMKRHGLHLLGTTSTWFLLDIAFYSQNLFQKDIFSAIGWIPPAQTMNAIQEVFKIARAQTLIALCSTVPGYWFTVAFIDVIGRFAIQMMGFFFMTVFMFALAIPYDHWTHKENRIGFVAMYSLTFFFANFGPNATTFVVPAEIFPARFRSTCHGISAASGKLGAMVGAFGFLYLAQSPDKTKTEHGYPPGIGVKNSLIVLGVVNLLGMVFTLLVPESKGKSLEEMSGENEQNDESSSSSNNNSNNAVSTA</sequence>
<accession>Q494P0</accession>
<accession>Q9M1T0</accession>
<evidence type="ECO:0000250" key="1"/>
<evidence type="ECO:0000250" key="2">
    <source>
        <dbReference type="UniProtKB" id="Q96303"/>
    </source>
</evidence>
<evidence type="ECO:0000255" key="3"/>
<evidence type="ECO:0000256" key="4">
    <source>
        <dbReference type="SAM" id="MobiDB-lite"/>
    </source>
</evidence>
<evidence type="ECO:0000269" key="5">
    <source>
    </source>
</evidence>
<evidence type="ECO:0000269" key="6">
    <source>
    </source>
</evidence>
<evidence type="ECO:0000305" key="7"/>
<name>PHT17_ARATH</name>
<gene>
    <name type="primary">PHT1-7</name>
    <name type="ordered locus">At3g54700</name>
    <name type="ORF">T5N23.60</name>
</gene>
<proteinExistence type="evidence at transcript level"/>